<reference key="1">
    <citation type="journal article" date="2000" name="Nature">
        <title>Sequence and analysis of chromosome 5 of the plant Arabidopsis thaliana.</title>
        <authorList>
            <person name="Tabata S."/>
            <person name="Kaneko T."/>
            <person name="Nakamura Y."/>
            <person name="Kotani H."/>
            <person name="Kato T."/>
            <person name="Asamizu E."/>
            <person name="Miyajima N."/>
            <person name="Sasamoto S."/>
            <person name="Kimura T."/>
            <person name="Hosouchi T."/>
            <person name="Kawashima K."/>
            <person name="Kohara M."/>
            <person name="Matsumoto M."/>
            <person name="Matsuno A."/>
            <person name="Muraki A."/>
            <person name="Nakayama S."/>
            <person name="Nakazaki N."/>
            <person name="Naruo K."/>
            <person name="Okumura S."/>
            <person name="Shinpo S."/>
            <person name="Takeuchi C."/>
            <person name="Wada T."/>
            <person name="Watanabe A."/>
            <person name="Yamada M."/>
            <person name="Yasuda M."/>
            <person name="Sato S."/>
            <person name="de la Bastide M."/>
            <person name="Huang E."/>
            <person name="Spiegel L."/>
            <person name="Gnoj L."/>
            <person name="O'Shaughnessy A."/>
            <person name="Preston R."/>
            <person name="Habermann K."/>
            <person name="Murray J."/>
            <person name="Johnson D."/>
            <person name="Rohlfing T."/>
            <person name="Nelson J."/>
            <person name="Stoneking T."/>
            <person name="Pepin K."/>
            <person name="Spieth J."/>
            <person name="Sekhon M."/>
            <person name="Armstrong J."/>
            <person name="Becker M."/>
            <person name="Belter E."/>
            <person name="Cordum H."/>
            <person name="Cordes M."/>
            <person name="Courtney L."/>
            <person name="Courtney W."/>
            <person name="Dante M."/>
            <person name="Du H."/>
            <person name="Edwards J."/>
            <person name="Fryman J."/>
            <person name="Haakensen B."/>
            <person name="Lamar E."/>
            <person name="Latreille P."/>
            <person name="Leonard S."/>
            <person name="Meyer R."/>
            <person name="Mulvaney E."/>
            <person name="Ozersky P."/>
            <person name="Riley A."/>
            <person name="Strowmatt C."/>
            <person name="Wagner-McPherson C."/>
            <person name="Wollam A."/>
            <person name="Yoakum M."/>
            <person name="Bell M."/>
            <person name="Dedhia N."/>
            <person name="Parnell L."/>
            <person name="Shah R."/>
            <person name="Rodriguez M."/>
            <person name="Hoon See L."/>
            <person name="Vil D."/>
            <person name="Baker J."/>
            <person name="Kirchoff K."/>
            <person name="Toth K."/>
            <person name="King L."/>
            <person name="Bahret A."/>
            <person name="Miller B."/>
            <person name="Marra M.A."/>
            <person name="Martienssen R."/>
            <person name="McCombie W.R."/>
            <person name="Wilson R.K."/>
            <person name="Murphy G."/>
            <person name="Bancroft I."/>
            <person name="Volckaert G."/>
            <person name="Wambutt R."/>
            <person name="Duesterhoeft A."/>
            <person name="Stiekema W."/>
            <person name="Pohl T."/>
            <person name="Entian K.-D."/>
            <person name="Terryn N."/>
            <person name="Hartley N."/>
            <person name="Bent E."/>
            <person name="Johnson S."/>
            <person name="Langham S.-A."/>
            <person name="McCullagh B."/>
            <person name="Robben J."/>
            <person name="Grymonprez B."/>
            <person name="Zimmermann W."/>
            <person name="Ramsperger U."/>
            <person name="Wedler H."/>
            <person name="Balke K."/>
            <person name="Wedler E."/>
            <person name="Peters S."/>
            <person name="van Staveren M."/>
            <person name="Dirkse W."/>
            <person name="Mooijman P."/>
            <person name="Klein Lankhorst R."/>
            <person name="Weitzenegger T."/>
            <person name="Bothe G."/>
            <person name="Rose M."/>
            <person name="Hauf J."/>
            <person name="Berneiser S."/>
            <person name="Hempel S."/>
            <person name="Feldpausch M."/>
            <person name="Lamberth S."/>
            <person name="Villarroel R."/>
            <person name="Gielen J."/>
            <person name="Ardiles W."/>
            <person name="Bents O."/>
            <person name="Lemcke K."/>
            <person name="Kolesov G."/>
            <person name="Mayer K.F.X."/>
            <person name="Rudd S."/>
            <person name="Schoof H."/>
            <person name="Schueller C."/>
            <person name="Zaccaria P."/>
            <person name="Mewes H.-W."/>
            <person name="Bevan M."/>
            <person name="Fransz P.F."/>
        </authorList>
    </citation>
    <scope>NUCLEOTIDE SEQUENCE [LARGE SCALE GENOMIC DNA]</scope>
    <source>
        <strain>cv. Columbia</strain>
    </source>
</reference>
<reference key="2">
    <citation type="journal article" date="2017" name="Plant J.">
        <title>Araport11: a complete reannotation of the Arabidopsis thaliana reference genome.</title>
        <authorList>
            <person name="Cheng C.Y."/>
            <person name="Krishnakumar V."/>
            <person name="Chan A.P."/>
            <person name="Thibaud-Nissen F."/>
            <person name="Schobel S."/>
            <person name="Town C.D."/>
        </authorList>
    </citation>
    <scope>GENOME REANNOTATION</scope>
    <source>
        <strain>cv. Columbia</strain>
    </source>
</reference>
<reference key="3">
    <citation type="journal article" date="2004" name="Plant Cell">
        <title>Genome-wide analysis of Arabidopsis pentatricopeptide repeat proteins reveals their essential role in organelle biogenesis.</title>
        <authorList>
            <person name="Lurin C."/>
            <person name="Andres C."/>
            <person name="Aubourg S."/>
            <person name="Bellaoui M."/>
            <person name="Bitton F."/>
            <person name="Bruyere C."/>
            <person name="Caboche M."/>
            <person name="Debast C."/>
            <person name="Gualberto J."/>
            <person name="Hoffmann B."/>
            <person name="Lecharny A."/>
            <person name="Le Ret M."/>
            <person name="Martin-Magniette M.-L."/>
            <person name="Mireau H."/>
            <person name="Peeters N."/>
            <person name="Renou J.-P."/>
            <person name="Szurek B."/>
            <person name="Taconnat L."/>
            <person name="Small I."/>
        </authorList>
    </citation>
    <scope>GENE FAMILY</scope>
</reference>
<evidence type="ECO:0000255" key="1"/>
<evidence type="ECO:0000305" key="2"/>
<sequence length="752" mass="84263">MTILTVQSSFSSSRVPVIKNANFDQIPSWVSLKSSTSSPSVKISHKQGQVENLHLVSLSKHRKLNEAFEFLQEMDKAGVSVSSYSYQCLFEACRELRSLSHGRLLHDRMRMGIENPSVLLQNCVLQMYCECRSLEDADKLFDEMSELNAVSRTTMISAYAEQGILDKAVGLFSGMLASGDKPPSSMYTTLLKSLVNPRALDFGRQIHAHVIRAGLCSNTSIETGIVNMYVKCGWLVGAKRVFDQMAVKKPVACTGLMVGYTQAGRARDALKLFVDLVTEGVEWDSFVFSVVLKACASLEELNLGKQIHACVAKLGLESEVSVGTPLVDFYIKCSSFESACRAFQEIREPNDVSWSAIISGYCQMSQFEEAVKTFKSLRSKNASILNSFTYTSIFQACSVLADCNIGGQVHADAIKRSLIGSQYGESALITMYSKCGCLDDANEVFESMDNPDIVAWTAFISGHAYYGNASEALRLFEKMVSCGMKPNSVTFIAVLTACSHAGLVEQGKHCLDTMLRKYNVAPTIDHYDCMIDIYARSGLLDEALKFMKNMPFEPDAMSWKCFLSGCWTHKNLELGEIAGEELRQLDPEDTAGYVLPFNLYTWAGKWEEAAEMMKLMNERMLKKELSCSWIQEKGKIHRFIVGDKHHPQTQEIYEKLKEFDGFMEGDMFQCNMTERREQLLDHSERLAIAFGLISVHGNAPAPIKVFKNLRACPDCHEFAKHVSLVTGHEIVIRDSRRFHHFKEGKCSCNDYW</sequence>
<gene>
    <name type="primary">PCMP-H90</name>
    <name type="ordered locus">At5g13270</name>
    <name type="ORF">T31B5_90</name>
</gene>
<dbReference type="EMBL" id="AL163491">
    <property type="protein sequence ID" value="CAB86634.1"/>
    <property type="molecule type" value="Genomic_DNA"/>
</dbReference>
<dbReference type="EMBL" id="CP002688">
    <property type="protein sequence ID" value="AED91873.1"/>
    <property type="molecule type" value="Genomic_DNA"/>
</dbReference>
<dbReference type="PIR" id="T48574">
    <property type="entry name" value="T48574"/>
</dbReference>
<dbReference type="SMR" id="Q9LYU9"/>
<dbReference type="BioGRID" id="16446">
    <property type="interactions" value="1"/>
</dbReference>
<dbReference type="FunCoup" id="Q9LYU9">
    <property type="interactions" value="173"/>
</dbReference>
<dbReference type="STRING" id="3702.Q9LYU9"/>
<dbReference type="PaxDb" id="3702-AT5G13270.1"/>
<dbReference type="ProteomicsDB" id="249262"/>
<dbReference type="EnsemblPlants" id="AT5G13270.1">
    <property type="protein sequence ID" value="AT5G13270.1"/>
    <property type="gene ID" value="AT5G13270"/>
</dbReference>
<dbReference type="GeneID" id="831168"/>
<dbReference type="Gramene" id="AT5G13270.1">
    <property type="protein sequence ID" value="AT5G13270.1"/>
    <property type="gene ID" value="AT5G13270"/>
</dbReference>
<dbReference type="KEGG" id="ath:AT5G13270"/>
<dbReference type="Araport" id="AT5G13270"/>
<dbReference type="TAIR" id="AT5G13270">
    <property type="gene designation" value="RARE1"/>
</dbReference>
<dbReference type="eggNOG" id="KOG4197">
    <property type="taxonomic scope" value="Eukaryota"/>
</dbReference>
<dbReference type="HOGENOM" id="CLU_002706_37_8_1"/>
<dbReference type="InParanoid" id="Q9LYU9"/>
<dbReference type="OMA" id="KDCHDFA"/>
<dbReference type="PhylomeDB" id="Q9LYU9"/>
<dbReference type="PRO" id="PR:Q9LYU9"/>
<dbReference type="Proteomes" id="UP000006548">
    <property type="component" value="Chromosome 5"/>
</dbReference>
<dbReference type="ExpressionAtlas" id="Q9LYU9">
    <property type="expression patterns" value="baseline and differential"/>
</dbReference>
<dbReference type="GO" id="GO:0009507">
    <property type="term" value="C:chloroplast"/>
    <property type="evidence" value="ECO:0007669"/>
    <property type="project" value="UniProtKB-SubCell"/>
</dbReference>
<dbReference type="GO" id="GO:0003729">
    <property type="term" value="F:mRNA binding"/>
    <property type="evidence" value="ECO:0000314"/>
    <property type="project" value="TAIR"/>
</dbReference>
<dbReference type="GO" id="GO:0008270">
    <property type="term" value="F:zinc ion binding"/>
    <property type="evidence" value="ECO:0007669"/>
    <property type="project" value="InterPro"/>
</dbReference>
<dbReference type="GO" id="GO:0009451">
    <property type="term" value="P:RNA modification"/>
    <property type="evidence" value="ECO:0000315"/>
    <property type="project" value="TAIR"/>
</dbReference>
<dbReference type="FunFam" id="1.25.40.10:FF:000381">
    <property type="entry name" value="Pentatricopeptide repeat-containing protein"/>
    <property type="match status" value="1"/>
</dbReference>
<dbReference type="FunFam" id="1.25.40.10:FF:001093">
    <property type="entry name" value="Pentatricopeptide repeat-containing protein At2g34400"/>
    <property type="match status" value="1"/>
</dbReference>
<dbReference type="FunFam" id="1.25.40.10:FF:000309">
    <property type="entry name" value="Pentatricopeptide repeat-containing protein, chloroplastic"/>
    <property type="match status" value="1"/>
</dbReference>
<dbReference type="FunFam" id="1.25.40.10:FF:000380">
    <property type="entry name" value="Pentatricopeptide repeat-containing protein, chloroplastic"/>
    <property type="match status" value="1"/>
</dbReference>
<dbReference type="Gene3D" id="1.25.40.10">
    <property type="entry name" value="Tetratricopeptide repeat domain"/>
    <property type="match status" value="4"/>
</dbReference>
<dbReference type="InterPro" id="IPR032867">
    <property type="entry name" value="DYW_dom"/>
</dbReference>
<dbReference type="InterPro" id="IPR046848">
    <property type="entry name" value="E_motif"/>
</dbReference>
<dbReference type="InterPro" id="IPR046849">
    <property type="entry name" value="Eplus_motif"/>
</dbReference>
<dbReference type="InterPro" id="IPR002885">
    <property type="entry name" value="Pentatricopeptide_rpt"/>
</dbReference>
<dbReference type="InterPro" id="IPR046960">
    <property type="entry name" value="PPR_At4g14850-like_plant"/>
</dbReference>
<dbReference type="InterPro" id="IPR011990">
    <property type="entry name" value="TPR-like_helical_dom_sf"/>
</dbReference>
<dbReference type="NCBIfam" id="TIGR00756">
    <property type="entry name" value="PPR"/>
    <property type="match status" value="5"/>
</dbReference>
<dbReference type="PANTHER" id="PTHR47926:SF378">
    <property type="entry name" value="PENTATRICOPEPTIDE REPEAT (PPR) SUPERFAMILY PROTEIN"/>
    <property type="match status" value="1"/>
</dbReference>
<dbReference type="PANTHER" id="PTHR47926">
    <property type="entry name" value="PENTATRICOPEPTIDE REPEAT-CONTAINING PROTEIN"/>
    <property type="match status" value="1"/>
</dbReference>
<dbReference type="Pfam" id="PF14432">
    <property type="entry name" value="DYW_deaminase"/>
    <property type="match status" value="1"/>
</dbReference>
<dbReference type="Pfam" id="PF20431">
    <property type="entry name" value="E_motif"/>
    <property type="match status" value="1"/>
</dbReference>
<dbReference type="Pfam" id="PF20430">
    <property type="entry name" value="Eplus_motif"/>
    <property type="match status" value="1"/>
</dbReference>
<dbReference type="Pfam" id="PF01535">
    <property type="entry name" value="PPR"/>
    <property type="match status" value="7"/>
</dbReference>
<dbReference type="Pfam" id="PF13041">
    <property type="entry name" value="PPR_2"/>
    <property type="match status" value="2"/>
</dbReference>
<dbReference type="PROSITE" id="PS51375">
    <property type="entry name" value="PPR"/>
    <property type="match status" value="15"/>
</dbReference>
<keyword id="KW-0150">Chloroplast</keyword>
<keyword id="KW-0934">Plastid</keyword>
<keyword id="KW-1185">Reference proteome</keyword>
<keyword id="KW-0677">Repeat</keyword>
<keyword id="KW-0809">Transit peptide</keyword>
<proteinExistence type="evidence at transcript level"/>
<protein>
    <recommendedName>
        <fullName>Pentatricopeptide repeat-containing protein At5g13270, chloroplastic</fullName>
    </recommendedName>
</protein>
<name>PP378_ARATH</name>
<comment type="subcellular location">
    <subcellularLocation>
        <location evidence="2">Plastid</location>
        <location evidence="2">Chloroplast</location>
    </subcellularLocation>
</comment>
<comment type="similarity">
    <text evidence="2">Belongs to the PPR family. PCMP-H subfamily.</text>
</comment>
<comment type="online information" name="Pentatricopeptide repeat proteins">
    <link uri="https://ppr.plantenergy.uwa.edu.au"/>
</comment>
<feature type="transit peptide" description="Chloroplast" evidence="1">
    <location>
        <begin position="1"/>
        <end position="80"/>
    </location>
</feature>
<feature type="chain" id="PRO_0000363515" description="Pentatricopeptide repeat-containing protein At5g13270, chloroplastic">
    <location>
        <begin position="81"/>
        <end position="752"/>
    </location>
</feature>
<feature type="repeat" description="PPR 1">
    <location>
        <begin position="47"/>
        <end position="81"/>
    </location>
</feature>
<feature type="repeat" description="PPR 2">
    <location>
        <begin position="82"/>
        <end position="116"/>
    </location>
</feature>
<feature type="repeat" description="PPR 3">
    <location>
        <begin position="117"/>
        <end position="147"/>
    </location>
</feature>
<feature type="repeat" description="PPR 4">
    <location>
        <begin position="148"/>
        <end position="182"/>
    </location>
</feature>
<feature type="repeat" description="PPR 5">
    <location>
        <begin position="183"/>
        <end position="217"/>
    </location>
</feature>
<feature type="repeat" description="PPR 6">
    <location>
        <begin position="218"/>
        <end position="248"/>
    </location>
</feature>
<feature type="repeat" description="PPR 7">
    <location>
        <begin position="249"/>
        <end position="283"/>
    </location>
</feature>
<feature type="repeat" description="PPR 8">
    <location>
        <begin position="284"/>
        <end position="318"/>
    </location>
</feature>
<feature type="repeat" description="PPR 9">
    <location>
        <begin position="319"/>
        <end position="349"/>
    </location>
</feature>
<feature type="repeat" description="PPR 10">
    <location>
        <begin position="350"/>
        <end position="384"/>
    </location>
</feature>
<feature type="repeat" description="PPR 11">
    <location>
        <begin position="386"/>
        <end position="420"/>
    </location>
</feature>
<feature type="repeat" description="PPR 12">
    <location>
        <begin position="421"/>
        <end position="451"/>
    </location>
</feature>
<feature type="repeat" description="PPR 13">
    <location>
        <begin position="452"/>
        <end position="486"/>
    </location>
</feature>
<feature type="repeat" description="PPR 14">
    <location>
        <begin position="487"/>
        <end position="522"/>
    </location>
</feature>
<feature type="repeat" description="PPR 15">
    <location>
        <begin position="523"/>
        <end position="553"/>
    </location>
</feature>
<feature type="region of interest" description="Type E motif">
    <location>
        <begin position="558"/>
        <end position="633"/>
    </location>
</feature>
<feature type="region of interest" description="Type E(+) motif">
    <location>
        <begin position="634"/>
        <end position="664"/>
    </location>
</feature>
<feature type="region of interest" description="Type DYW motif">
    <location>
        <begin position="665"/>
        <end position="752"/>
    </location>
</feature>
<organism>
    <name type="scientific">Arabidopsis thaliana</name>
    <name type="common">Mouse-ear cress</name>
    <dbReference type="NCBI Taxonomy" id="3702"/>
    <lineage>
        <taxon>Eukaryota</taxon>
        <taxon>Viridiplantae</taxon>
        <taxon>Streptophyta</taxon>
        <taxon>Embryophyta</taxon>
        <taxon>Tracheophyta</taxon>
        <taxon>Spermatophyta</taxon>
        <taxon>Magnoliopsida</taxon>
        <taxon>eudicotyledons</taxon>
        <taxon>Gunneridae</taxon>
        <taxon>Pentapetalae</taxon>
        <taxon>rosids</taxon>
        <taxon>malvids</taxon>
        <taxon>Brassicales</taxon>
        <taxon>Brassicaceae</taxon>
        <taxon>Camelineae</taxon>
        <taxon>Arabidopsis</taxon>
    </lineage>
</organism>
<accession>Q9LYU9</accession>